<dbReference type="EC" id="2.7.4.9" evidence="1"/>
<dbReference type="EMBL" id="AE014075">
    <property type="protein sequence ID" value="AAN79840.1"/>
    <property type="molecule type" value="Genomic_DNA"/>
</dbReference>
<dbReference type="RefSeq" id="WP_001257013.1">
    <property type="nucleotide sequence ID" value="NZ_CP051263.1"/>
</dbReference>
<dbReference type="SMR" id="Q8FIN9"/>
<dbReference type="STRING" id="199310.c1370"/>
<dbReference type="KEGG" id="ecc:c1370"/>
<dbReference type="eggNOG" id="COG0125">
    <property type="taxonomic scope" value="Bacteria"/>
</dbReference>
<dbReference type="HOGENOM" id="CLU_049131_0_1_6"/>
<dbReference type="BioCyc" id="ECOL199310:C1370-MONOMER"/>
<dbReference type="Proteomes" id="UP000001410">
    <property type="component" value="Chromosome"/>
</dbReference>
<dbReference type="GO" id="GO:0005829">
    <property type="term" value="C:cytosol"/>
    <property type="evidence" value="ECO:0007669"/>
    <property type="project" value="TreeGrafter"/>
</dbReference>
<dbReference type="GO" id="GO:0005524">
    <property type="term" value="F:ATP binding"/>
    <property type="evidence" value="ECO:0007669"/>
    <property type="project" value="UniProtKB-UniRule"/>
</dbReference>
<dbReference type="GO" id="GO:0004798">
    <property type="term" value="F:dTMP kinase activity"/>
    <property type="evidence" value="ECO:0007669"/>
    <property type="project" value="UniProtKB-UniRule"/>
</dbReference>
<dbReference type="GO" id="GO:0006233">
    <property type="term" value="P:dTDP biosynthetic process"/>
    <property type="evidence" value="ECO:0007669"/>
    <property type="project" value="InterPro"/>
</dbReference>
<dbReference type="GO" id="GO:0006235">
    <property type="term" value="P:dTTP biosynthetic process"/>
    <property type="evidence" value="ECO:0007669"/>
    <property type="project" value="UniProtKB-UniRule"/>
</dbReference>
<dbReference type="GO" id="GO:0006227">
    <property type="term" value="P:dUDP biosynthetic process"/>
    <property type="evidence" value="ECO:0007669"/>
    <property type="project" value="TreeGrafter"/>
</dbReference>
<dbReference type="CDD" id="cd01672">
    <property type="entry name" value="TMPK"/>
    <property type="match status" value="1"/>
</dbReference>
<dbReference type="FunFam" id="3.40.50.300:FF:000321">
    <property type="entry name" value="Thymidylate kinase"/>
    <property type="match status" value="1"/>
</dbReference>
<dbReference type="Gene3D" id="3.40.50.300">
    <property type="entry name" value="P-loop containing nucleotide triphosphate hydrolases"/>
    <property type="match status" value="1"/>
</dbReference>
<dbReference type="HAMAP" id="MF_00165">
    <property type="entry name" value="Thymidylate_kinase"/>
    <property type="match status" value="1"/>
</dbReference>
<dbReference type="InterPro" id="IPR027417">
    <property type="entry name" value="P-loop_NTPase"/>
</dbReference>
<dbReference type="InterPro" id="IPR039430">
    <property type="entry name" value="Thymidylate_kin-like_dom"/>
</dbReference>
<dbReference type="InterPro" id="IPR018095">
    <property type="entry name" value="Thymidylate_kin_CS"/>
</dbReference>
<dbReference type="InterPro" id="IPR018094">
    <property type="entry name" value="Thymidylate_kinase"/>
</dbReference>
<dbReference type="NCBIfam" id="TIGR00041">
    <property type="entry name" value="DTMP_kinase"/>
    <property type="match status" value="1"/>
</dbReference>
<dbReference type="PANTHER" id="PTHR10344">
    <property type="entry name" value="THYMIDYLATE KINASE"/>
    <property type="match status" value="1"/>
</dbReference>
<dbReference type="PANTHER" id="PTHR10344:SF4">
    <property type="entry name" value="UMP-CMP KINASE 2, MITOCHONDRIAL"/>
    <property type="match status" value="1"/>
</dbReference>
<dbReference type="Pfam" id="PF02223">
    <property type="entry name" value="Thymidylate_kin"/>
    <property type="match status" value="1"/>
</dbReference>
<dbReference type="SUPFAM" id="SSF52540">
    <property type="entry name" value="P-loop containing nucleoside triphosphate hydrolases"/>
    <property type="match status" value="1"/>
</dbReference>
<dbReference type="PROSITE" id="PS01331">
    <property type="entry name" value="THYMIDYLATE_KINASE"/>
    <property type="match status" value="1"/>
</dbReference>
<proteinExistence type="inferred from homology"/>
<protein>
    <recommendedName>
        <fullName evidence="1">Thymidylate kinase</fullName>
        <ecNumber evidence="1">2.7.4.9</ecNumber>
    </recommendedName>
    <alternativeName>
        <fullName evidence="1">dTMP kinase</fullName>
    </alternativeName>
</protein>
<reference key="1">
    <citation type="journal article" date="2002" name="Proc. Natl. Acad. Sci. U.S.A.">
        <title>Extensive mosaic structure revealed by the complete genome sequence of uropathogenic Escherichia coli.</title>
        <authorList>
            <person name="Welch R.A."/>
            <person name="Burland V."/>
            <person name="Plunkett G. III"/>
            <person name="Redford P."/>
            <person name="Roesch P."/>
            <person name="Rasko D."/>
            <person name="Buckles E.L."/>
            <person name="Liou S.-R."/>
            <person name="Boutin A."/>
            <person name="Hackett J."/>
            <person name="Stroud D."/>
            <person name="Mayhew G.F."/>
            <person name="Rose D.J."/>
            <person name="Zhou S."/>
            <person name="Schwartz D.C."/>
            <person name="Perna N.T."/>
            <person name="Mobley H.L.T."/>
            <person name="Donnenberg M.S."/>
            <person name="Blattner F.R."/>
        </authorList>
    </citation>
    <scope>NUCLEOTIDE SEQUENCE [LARGE SCALE GENOMIC DNA]</scope>
    <source>
        <strain>CFT073 / ATCC 700928 / UPEC</strain>
    </source>
</reference>
<evidence type="ECO:0000255" key="1">
    <source>
        <dbReference type="HAMAP-Rule" id="MF_00165"/>
    </source>
</evidence>
<keyword id="KW-0067">ATP-binding</keyword>
<keyword id="KW-0418">Kinase</keyword>
<keyword id="KW-0545">Nucleotide biosynthesis</keyword>
<keyword id="KW-0547">Nucleotide-binding</keyword>
<keyword id="KW-1185">Reference proteome</keyword>
<keyword id="KW-0808">Transferase</keyword>
<feature type="chain" id="PRO_0000155270" description="Thymidylate kinase">
    <location>
        <begin position="1"/>
        <end position="213"/>
    </location>
</feature>
<feature type="binding site" evidence="1">
    <location>
        <begin position="10"/>
        <end position="17"/>
    </location>
    <ligand>
        <name>ATP</name>
        <dbReference type="ChEBI" id="CHEBI:30616"/>
    </ligand>
</feature>
<organism>
    <name type="scientific">Escherichia coli O6:H1 (strain CFT073 / ATCC 700928 / UPEC)</name>
    <dbReference type="NCBI Taxonomy" id="199310"/>
    <lineage>
        <taxon>Bacteria</taxon>
        <taxon>Pseudomonadati</taxon>
        <taxon>Pseudomonadota</taxon>
        <taxon>Gammaproteobacteria</taxon>
        <taxon>Enterobacterales</taxon>
        <taxon>Enterobacteriaceae</taxon>
        <taxon>Escherichia</taxon>
    </lineage>
</organism>
<comment type="function">
    <text evidence="1">Phosphorylation of dTMP to form dTDP in both de novo and salvage pathways of dTTP synthesis.</text>
</comment>
<comment type="catalytic activity">
    <reaction evidence="1">
        <text>dTMP + ATP = dTDP + ADP</text>
        <dbReference type="Rhea" id="RHEA:13517"/>
        <dbReference type="ChEBI" id="CHEBI:30616"/>
        <dbReference type="ChEBI" id="CHEBI:58369"/>
        <dbReference type="ChEBI" id="CHEBI:63528"/>
        <dbReference type="ChEBI" id="CHEBI:456216"/>
        <dbReference type="EC" id="2.7.4.9"/>
    </reaction>
</comment>
<comment type="similarity">
    <text evidence="1">Belongs to the thymidylate kinase family.</text>
</comment>
<sequence>MRSKYIVIEGLEGAGKTTARNVVVETLEQLGIRDMVFTREPGGTQLAEKLRSLVLDIKSVGDEVITDKAEVLMFYAARVQLVETVIKPALANGTWVIGDRHDLSTQAYQGGGRGIDQHMLATLRDAVLGGVRPDLTLYLDVTPEVGLKRARARGELDRIEQESFDFFNRTRARYLELAAQDKSIHTIDATQPLEAVMDAIRTTVTNWVKELDA</sequence>
<name>KTHY_ECOL6</name>
<gene>
    <name evidence="1" type="primary">tmk</name>
    <name type="ordered locus">c1370</name>
</gene>
<accession>Q8FIN9</accession>